<accession>P0AGF7</accession>
<accession>P05792</accession>
<dbReference type="EC" id="4.3.1.19"/>
<dbReference type="EC" id="4.3.1.17"/>
<dbReference type="EMBL" id="AE014075">
    <property type="protein sequence ID" value="AAN82316.1"/>
    <property type="molecule type" value="Genomic_DNA"/>
</dbReference>
<dbReference type="RefSeq" id="WP_000548347.1">
    <property type="nucleotide sequence ID" value="NZ_CP051263.1"/>
</dbReference>
<dbReference type="SMR" id="P0AGF7"/>
<dbReference type="STRING" id="199310.c3875"/>
<dbReference type="GeneID" id="75205074"/>
<dbReference type="KEGG" id="ecc:c3875"/>
<dbReference type="eggNOG" id="COG1171">
    <property type="taxonomic scope" value="Bacteria"/>
</dbReference>
<dbReference type="HOGENOM" id="CLU_021152_4_2_6"/>
<dbReference type="BioCyc" id="ECOL199310:C3875-MONOMER"/>
<dbReference type="UniPathway" id="UPA00052">
    <property type="reaction ID" value="UER00507"/>
</dbReference>
<dbReference type="Proteomes" id="UP000001410">
    <property type="component" value="Chromosome"/>
</dbReference>
<dbReference type="GO" id="GO:0003941">
    <property type="term" value="F:L-serine ammonia-lyase activity"/>
    <property type="evidence" value="ECO:0007669"/>
    <property type="project" value="UniProtKB-EC"/>
</dbReference>
<dbReference type="GO" id="GO:0000166">
    <property type="term" value="F:nucleotide binding"/>
    <property type="evidence" value="ECO:0007669"/>
    <property type="project" value="UniProtKB-KW"/>
</dbReference>
<dbReference type="GO" id="GO:0030170">
    <property type="term" value="F:pyridoxal phosphate binding"/>
    <property type="evidence" value="ECO:0007669"/>
    <property type="project" value="InterPro"/>
</dbReference>
<dbReference type="GO" id="GO:0004794">
    <property type="term" value="F:threonine deaminase activity"/>
    <property type="evidence" value="ECO:0007669"/>
    <property type="project" value="UniProtKB-EC"/>
</dbReference>
<dbReference type="GO" id="GO:0009097">
    <property type="term" value="P:isoleucine biosynthetic process"/>
    <property type="evidence" value="ECO:0007669"/>
    <property type="project" value="TreeGrafter"/>
</dbReference>
<dbReference type="GO" id="GO:0006565">
    <property type="term" value="P:L-serine catabolic process"/>
    <property type="evidence" value="ECO:0007669"/>
    <property type="project" value="TreeGrafter"/>
</dbReference>
<dbReference type="GO" id="GO:0070689">
    <property type="term" value="P:L-threonine catabolic process to propionate"/>
    <property type="evidence" value="ECO:0007669"/>
    <property type="project" value="UniProtKB-UniPathway"/>
</dbReference>
<dbReference type="CDD" id="cd01562">
    <property type="entry name" value="Thr-dehyd"/>
    <property type="match status" value="1"/>
</dbReference>
<dbReference type="FunFam" id="3.40.50.1100:FF:000007">
    <property type="entry name" value="L-threonine dehydratase catabolic TdcB"/>
    <property type="match status" value="1"/>
</dbReference>
<dbReference type="FunFam" id="3.40.50.1100:FF:000005">
    <property type="entry name" value="Threonine dehydratase catabolic"/>
    <property type="match status" value="1"/>
</dbReference>
<dbReference type="Gene3D" id="3.40.50.1100">
    <property type="match status" value="2"/>
</dbReference>
<dbReference type="InterPro" id="IPR050147">
    <property type="entry name" value="Ser/Thr_Dehydratase"/>
</dbReference>
<dbReference type="InterPro" id="IPR000634">
    <property type="entry name" value="Ser/Thr_deHydtase_PyrdxlP-BS"/>
</dbReference>
<dbReference type="InterPro" id="IPR005789">
    <property type="entry name" value="Thr_deHydtase_catblc"/>
</dbReference>
<dbReference type="InterPro" id="IPR001926">
    <property type="entry name" value="TrpB-like_PALP"/>
</dbReference>
<dbReference type="InterPro" id="IPR036052">
    <property type="entry name" value="TrpB-like_PALP_sf"/>
</dbReference>
<dbReference type="NCBIfam" id="TIGR01127">
    <property type="entry name" value="ilvA_1Cterm"/>
    <property type="match status" value="1"/>
</dbReference>
<dbReference type="NCBIfam" id="NF006389">
    <property type="entry name" value="PRK08638.1"/>
    <property type="match status" value="1"/>
</dbReference>
<dbReference type="PANTHER" id="PTHR48078:SF6">
    <property type="entry name" value="L-THREONINE DEHYDRATASE CATABOLIC TDCB"/>
    <property type="match status" value="1"/>
</dbReference>
<dbReference type="PANTHER" id="PTHR48078">
    <property type="entry name" value="THREONINE DEHYDRATASE, MITOCHONDRIAL-RELATED"/>
    <property type="match status" value="1"/>
</dbReference>
<dbReference type="Pfam" id="PF00291">
    <property type="entry name" value="PALP"/>
    <property type="match status" value="1"/>
</dbReference>
<dbReference type="SUPFAM" id="SSF53686">
    <property type="entry name" value="Tryptophan synthase beta subunit-like PLP-dependent enzymes"/>
    <property type="match status" value="1"/>
</dbReference>
<dbReference type="PROSITE" id="PS00165">
    <property type="entry name" value="DEHYDRATASE_SER_THR"/>
    <property type="match status" value="1"/>
</dbReference>
<comment type="function">
    <text evidence="1">Catalyzes the anaerobic formation of alpha-ketobutyrate and ammonia from threonine in a two-step reaction. The first step involved a dehydration of threonine and a production of enamine intermediates (aminocrotonate), which tautomerizes to its imine form (iminobutyrate). Both intermediates are unstable and short-lived. The second step is the nonenzymatic hydrolysis of the enamine/imine intermediates to form 2-ketobutyrate and free ammonia. In the low water environment of the cell, the second step is accelerated by RidA. TdcB also dehydrates serine to yield pyruvate via analogous enamine/imine intermediates (By similarity).</text>
</comment>
<comment type="catalytic activity">
    <reaction>
        <text>L-threonine = 2-oxobutanoate + NH4(+)</text>
        <dbReference type="Rhea" id="RHEA:22108"/>
        <dbReference type="ChEBI" id="CHEBI:16763"/>
        <dbReference type="ChEBI" id="CHEBI:28938"/>
        <dbReference type="ChEBI" id="CHEBI:57926"/>
        <dbReference type="EC" id="4.3.1.19"/>
    </reaction>
</comment>
<comment type="catalytic activity">
    <reaction>
        <text>L-serine = pyruvate + NH4(+)</text>
        <dbReference type="Rhea" id="RHEA:19169"/>
        <dbReference type="ChEBI" id="CHEBI:15361"/>
        <dbReference type="ChEBI" id="CHEBI:28938"/>
        <dbReference type="ChEBI" id="CHEBI:33384"/>
        <dbReference type="EC" id="4.3.1.17"/>
    </reaction>
</comment>
<comment type="cofactor">
    <cofactor evidence="1">
        <name>pyridoxal 5'-phosphate</name>
        <dbReference type="ChEBI" id="CHEBI:597326"/>
    </cofactor>
</comment>
<comment type="activity regulation">
    <text evidence="1">Each protein molecule can bind up to four molecules of AMP, which act as an allosteric activator to the enzyme.</text>
</comment>
<comment type="pathway">
    <text>Amino-acid degradation; L-threonine degradation via propanoate pathway; propanoate from L-threonine: step 1/4.</text>
</comment>
<comment type="subunit">
    <text evidence="1">In the native structure, TdcB is in a dimeric form, whereas in the TdcB-AMP complex, it exists in a tetrameric form (dimer of dimers).</text>
</comment>
<comment type="similarity">
    <text evidence="2">Belongs to the serine/threonine dehydratase family.</text>
</comment>
<reference key="1">
    <citation type="journal article" date="2002" name="Proc. Natl. Acad. Sci. U.S.A.">
        <title>Extensive mosaic structure revealed by the complete genome sequence of uropathogenic Escherichia coli.</title>
        <authorList>
            <person name="Welch R.A."/>
            <person name="Burland V."/>
            <person name="Plunkett G. III"/>
            <person name="Redford P."/>
            <person name="Roesch P."/>
            <person name="Rasko D."/>
            <person name="Buckles E.L."/>
            <person name="Liou S.-R."/>
            <person name="Boutin A."/>
            <person name="Hackett J."/>
            <person name="Stroud D."/>
            <person name="Mayhew G.F."/>
            <person name="Rose D.J."/>
            <person name="Zhou S."/>
            <person name="Schwartz D.C."/>
            <person name="Perna N.T."/>
            <person name="Mobley H.L.T."/>
            <person name="Donnenberg M.S."/>
            <person name="Blattner F.R."/>
        </authorList>
    </citation>
    <scope>NUCLEOTIDE SEQUENCE [LARGE SCALE GENOMIC DNA]</scope>
    <source>
        <strain>CFT073 / ATCC 700928 / UPEC</strain>
    </source>
</reference>
<organism>
    <name type="scientific">Escherichia coli O6:H1 (strain CFT073 / ATCC 700928 / UPEC)</name>
    <dbReference type="NCBI Taxonomy" id="199310"/>
    <lineage>
        <taxon>Bacteria</taxon>
        <taxon>Pseudomonadati</taxon>
        <taxon>Pseudomonadota</taxon>
        <taxon>Gammaproteobacteria</taxon>
        <taxon>Enterobacterales</taxon>
        <taxon>Enterobacteriaceae</taxon>
        <taxon>Escherichia</taxon>
    </lineage>
</organism>
<feature type="chain" id="PRO_0000185584" description="L-threonine dehydratase catabolic TdcB">
    <location>
        <begin position="1"/>
        <end position="329"/>
    </location>
</feature>
<feature type="binding site" evidence="1">
    <location>
        <begin position="53"/>
        <end position="54"/>
    </location>
    <ligand>
        <name>AMP</name>
        <dbReference type="ChEBI" id="CHEBI:456215"/>
    </ligand>
</feature>
<feature type="binding site" evidence="1">
    <location>
        <position position="88"/>
    </location>
    <ligand>
        <name>AMP</name>
        <dbReference type="ChEBI" id="CHEBI:456215"/>
    </ligand>
</feature>
<feature type="binding site" evidence="1">
    <location>
        <begin position="119"/>
        <end position="120"/>
    </location>
    <ligand>
        <name>AMP</name>
        <dbReference type="ChEBI" id="CHEBI:456215"/>
    </ligand>
</feature>
<feature type="binding site" evidence="1">
    <location>
        <position position="314"/>
    </location>
    <ligand>
        <name>AMP</name>
        <dbReference type="ChEBI" id="CHEBI:456215"/>
    </ligand>
</feature>
<feature type="modified residue" description="N6-(pyridoxal phosphate)lysine" evidence="1">
    <location>
        <position position="58"/>
    </location>
</feature>
<sequence>MHITYDLPVAIDDIIEAKQRLAGRIYKTGMPRSNYFSERCKGEIFLKFENMQRTGSFKIRGAFNKLSSLTDAEKRKGVVACSAGNHAQGVSLSCAMLGIDGKVVMPKGAPKSKVAATCDYSAEVVLHGDNFNDTIAKVSEIVEMEGRIFIPPYDDPKVIAGQGTIGLEIMEDLYDVDNVIVPIGGGGLIAGIAVAIKSINPTIRVIGVQSENVHGMAASFHSGEITTHRTTGTLADGCDVSRPGNLTYEIVRELVDDIVLVSEDEIRNSMIALIQRNKVVTEGAGALACAALLSGKLDQYIQNRKTVSIISGGNIDLSRVSQITGFVDA</sequence>
<keyword id="KW-0021">Allosteric enzyme</keyword>
<keyword id="KW-0456">Lyase</keyword>
<keyword id="KW-0547">Nucleotide-binding</keyword>
<keyword id="KW-0663">Pyridoxal phosphate</keyword>
<keyword id="KW-1185">Reference proteome</keyword>
<gene>
    <name type="primary">tdcB</name>
    <name type="ordered locus">c3875</name>
</gene>
<protein>
    <recommendedName>
        <fullName>L-threonine dehydratase catabolic TdcB</fullName>
        <ecNumber>4.3.1.19</ecNumber>
    </recommendedName>
    <alternativeName>
        <fullName>L-serine dehydratase</fullName>
        <ecNumber>4.3.1.17</ecNumber>
    </alternativeName>
    <alternativeName>
        <fullName>Threonine deaminase</fullName>
    </alternativeName>
</protein>
<proteinExistence type="inferred from homology"/>
<name>TDCB_ECOL6</name>
<evidence type="ECO:0000250" key="1"/>
<evidence type="ECO:0000305" key="2"/>